<accession>P05840</accession>
<organismHost>
    <name type="scientific">Bombyx mori</name>
    <name type="common">Silk moth</name>
    <dbReference type="NCBI Taxonomy" id="7091"/>
</organismHost>
<feature type="chain" id="PRO_0000222486" description="Putative non-structural protein">
    <location>
        <begin position="1"/>
        <end position="455"/>
    </location>
</feature>
<feature type="region of interest" description="Disordered" evidence="1">
    <location>
        <begin position="262"/>
        <end position="341"/>
    </location>
</feature>
<feature type="compositionally biased region" description="Basic and acidic residues" evidence="1">
    <location>
        <begin position="262"/>
        <end position="276"/>
    </location>
</feature>
<proteinExistence type="predicted"/>
<dbReference type="EMBL" id="M60583">
    <property type="protein sequence ID" value="AAA42973.1"/>
    <property type="molecule type" value="Genomic_DNA"/>
</dbReference>
<dbReference type="EMBL" id="M15123">
    <property type="protein sequence ID" value="AAA67696.1"/>
    <property type="molecule type" value="Genomic_DNA"/>
</dbReference>
<dbReference type="PIR" id="A26796">
    <property type="entry name" value="UYPVF1"/>
</dbReference>
<dbReference type="Proteomes" id="UP000008471">
    <property type="component" value="Genome"/>
</dbReference>
<reference key="1">
    <citation type="journal article" date="1990" name="Virology">
        <title>Terminal structure of a Densovirus implies a hairpin transfer replication which is similar to the model for AAV.</title>
        <authorList>
            <person name="Bando H."/>
            <person name="Choi H."/>
            <person name="Ito Y."/>
            <person name="Kawase S."/>
        </authorList>
    </citation>
    <scope>NUCLEOTIDE SEQUENCE [GENOMIC DNA]</scope>
    <source>
        <strain>Isolate INA</strain>
    </source>
</reference>
<reference key="2">
    <citation type="journal article" date="1987" name="J. Virol.">
        <title>Organization and nucleotide sequence of a densovirus genome imply a host-dependent evolution of the parvoviruses.</title>
        <authorList>
            <person name="Bando H."/>
            <person name="Kusuda J."/>
            <person name="Gojobori T."/>
            <person name="Maruyama T."/>
            <person name="Kawase S."/>
        </authorList>
    </citation>
    <scope>NUCLEOTIDE SEQUENCE [GENOMIC DNA] OF 26-455</scope>
    <source>
        <strain>Isolate INA</strain>
    </source>
</reference>
<sequence length="455" mass="52489">MSTQSGGFTRTPGKDGLNPFDEDYVDLVRCMRNRGEHEEYTDLLDNVNTPRELLSAMESFEESSNEIPSQAATGVFAETGNRYDVPRSQDWDTMMKVVSAEEEMIEFLTEEFSAFIQKDCKNNSLEELIETVDEPKLVHSRTCIDEYYLTLILQNKAKETTDLKRPFPVSYQQMELCHKDALNSSERERSLDQFFRAVEPRMGILADQLCRRFENNTVNARRIYTTPLSLDQATDFVKWFTNRGELLIAEVRTLFGSMKQIKERKTTHKTLVEDTHPTTISESYRLDTDTAESQQSSQSESEREEENRRNRPSSSRHINTTRKRKSITTSKGVLTKKKSLKNQPRAISTYFTPADGTIMNAGASGGALTSIQGRIRQSLSTRSTPEHIRNIMFYNTKWPRSLCTSKWPTTEFEYVYRTESVCKESIQPKRHSNNWKRATIRMKVTFRTTVVTPTN</sequence>
<protein>
    <recommendedName>
        <fullName>Putative non-structural protein</fullName>
    </recommendedName>
    <alternativeName>
        <fullName>ORF1</fullName>
    </alternativeName>
</protein>
<evidence type="ECO:0000256" key="1">
    <source>
        <dbReference type="SAM" id="MobiDB-lite"/>
    </source>
</evidence>
<organism>
    <name type="scientific">Bombyx mori densovirus</name>
    <name type="common">BmDNV</name>
    <name type="synonym">Bombyx densonucleosis virus</name>
    <dbReference type="NCBI Taxonomy" id="10809"/>
    <lineage>
        <taxon>Viruses</taxon>
        <taxon>Monodnaviria</taxon>
        <taxon>Shotokuvirae</taxon>
        <taxon>Cossaviricota</taxon>
        <taxon>Quintoviricetes</taxon>
        <taxon>Piccovirales</taxon>
        <taxon>Parvoviridae</taxon>
        <taxon>Densovirinae</taxon>
        <taxon>Iteradensovirus</taxon>
        <taxon>Iteradensovirus lepidopteran1</taxon>
    </lineage>
</organism>
<name>VNS1_BMDNV</name>